<protein>
    <recommendedName>
        <fullName>Chlorophyll a-b binding protein 1C, chloroplastic</fullName>
    </recommendedName>
    <alternativeName>
        <fullName>LHCII type I CAB-1C</fullName>
        <shortName>LHCP</shortName>
    </alternativeName>
</protein>
<reference key="1">
    <citation type="journal article" date="1985" name="Gene">
        <title>Molecular characterization and genetic mapping of two clusters of genes encoding chlorophyll a/b-binding proteins in Lycopersicon esculentum (tomato).</title>
        <authorList>
            <person name="Pichersky E."/>
            <person name="Bernatzky R."/>
            <person name="Tanksley S.D."/>
            <person name="Breidenbach R.B."/>
            <person name="Kausch A.P."/>
            <person name="Cashmore A.R."/>
        </authorList>
    </citation>
    <scope>NUCLEOTIDE SEQUENCE [GENOMIC DNA]</scope>
    <source>
        <strain>cv. T6</strain>
    </source>
</reference>
<organism>
    <name type="scientific">Solanum lycopersicum</name>
    <name type="common">Tomato</name>
    <name type="synonym">Lycopersicon esculentum</name>
    <dbReference type="NCBI Taxonomy" id="4081"/>
    <lineage>
        <taxon>Eukaryota</taxon>
        <taxon>Viridiplantae</taxon>
        <taxon>Streptophyta</taxon>
        <taxon>Embryophyta</taxon>
        <taxon>Tracheophyta</taxon>
        <taxon>Spermatophyta</taxon>
        <taxon>Magnoliopsida</taxon>
        <taxon>eudicotyledons</taxon>
        <taxon>Gunneridae</taxon>
        <taxon>Pentapetalae</taxon>
        <taxon>asterids</taxon>
        <taxon>lamiids</taxon>
        <taxon>Solanales</taxon>
        <taxon>Solanaceae</taxon>
        <taxon>Solanoideae</taxon>
        <taxon>Solaneae</taxon>
        <taxon>Solanum</taxon>
        <taxon>Solanum subgen. Lycopersicon</taxon>
    </lineage>
</organism>
<feature type="transit peptide" description="Chloroplast">
    <location>
        <begin position="1"/>
        <end position="34"/>
    </location>
</feature>
<feature type="chain" id="PRO_0000003664" description="Chlorophyll a-b binding protein 1C, chloroplastic">
    <location>
        <begin position="35"/>
        <end position="265"/>
    </location>
</feature>
<feature type="transmembrane region" description="Helical" evidence="4">
    <location>
        <begin position="151"/>
        <end position="171"/>
    </location>
</feature>
<feature type="transmembrane region" description="Helical" evidence="4">
    <location>
        <begin position="219"/>
        <end position="239"/>
    </location>
</feature>
<feature type="binding site" description="axial binding residue" evidence="3">
    <location>
        <position position="152"/>
    </location>
    <ligand>
        <name>chlorophyll b</name>
        <dbReference type="ChEBI" id="CHEBI:61721"/>
        <label>2</label>
    </ligand>
    <ligandPart>
        <name>Mg</name>
        <dbReference type="ChEBI" id="CHEBI:25107"/>
    </ligandPart>
</feature>
<feature type="binding site" evidence="1">
    <location>
        <position position="156"/>
    </location>
    <ligand>
        <name>chlorophyll b</name>
        <dbReference type="ChEBI" id="CHEBI:61721"/>
        <label>3</label>
    </ligand>
</feature>
<feature type="binding site" evidence="1">
    <location>
        <position position="164"/>
    </location>
    <ligand>
        <name>chlorophyll b</name>
        <dbReference type="ChEBI" id="CHEBI:61721"/>
        <label>4</label>
    </ligand>
</feature>
<feature type="binding site" evidence="2">
    <location>
        <position position="164"/>
    </location>
    <ligand>
        <name>chlorophyll b</name>
        <dbReference type="ChEBI" id="CHEBI:61721"/>
        <label>5</label>
    </ligand>
</feature>
<feature type="binding site" description="axial binding residue" evidence="3">
    <location>
        <position position="172"/>
    </location>
    <ligand>
        <name>chlorophyll b</name>
        <dbReference type="ChEBI" id="CHEBI:61721"/>
        <label>3</label>
    </ligand>
    <ligandPart>
        <name>Mg</name>
        <dbReference type="ChEBI" id="CHEBI:25107"/>
    </ligandPart>
</feature>
<feature type="binding site" evidence="1">
    <location>
        <position position="175"/>
    </location>
    <ligand>
        <name>chlorophyll b</name>
        <dbReference type="ChEBI" id="CHEBI:61721"/>
        <label>4</label>
    </ligand>
</feature>
<feature type="binding site" evidence="1">
    <location>
        <position position="181"/>
    </location>
    <ligand>
        <name>chlorophyll b</name>
        <dbReference type="ChEBI" id="CHEBI:61721"/>
        <label>2</label>
    </ligand>
</feature>
<feature type="binding site" evidence="1">
    <location>
        <position position="212"/>
    </location>
    <ligand>
        <name>chlorophyll a</name>
        <dbReference type="ChEBI" id="CHEBI:58416"/>
        <label>5</label>
    </ligand>
</feature>
<feature type="binding site" description="axial binding residue" evidence="3">
    <location>
        <position position="213"/>
    </location>
    <ligand>
        <name>chlorophyll a</name>
        <dbReference type="ChEBI" id="CHEBI:58416"/>
        <label>3</label>
    </ligand>
    <ligandPart>
        <name>Mg</name>
        <dbReference type="ChEBI" id="CHEBI:25107"/>
    </ligandPart>
</feature>
<feature type="binding site" description="axial binding residue" evidence="3">
    <location>
        <position position="216"/>
    </location>
    <ligand>
        <name>chlorophyll a</name>
        <dbReference type="ChEBI" id="CHEBI:58416"/>
        <label>4</label>
    </ligand>
    <ligandPart>
        <name>Mg</name>
        <dbReference type="ChEBI" id="CHEBI:25107"/>
    </ligandPart>
</feature>
<feature type="binding site" evidence="1">
    <location>
        <position position="218"/>
    </location>
    <ligand>
        <name>chlorophyll a</name>
        <dbReference type="ChEBI" id="CHEBI:58416"/>
        <label>1</label>
    </ligand>
</feature>
<feature type="binding site" description="axial binding residue" evidence="3">
    <location>
        <position position="230"/>
    </location>
    <ligand>
        <name>chlorophyll a</name>
        <dbReference type="ChEBI" id="CHEBI:58416"/>
        <label>5</label>
    </ligand>
    <ligandPart>
        <name>Mg</name>
        <dbReference type="ChEBI" id="CHEBI:25107"/>
    </ligandPart>
</feature>
<feature type="binding site" description="axial binding residue" evidence="3">
    <location>
        <position position="245"/>
    </location>
    <ligand>
        <name>chlorophyll a</name>
        <dbReference type="ChEBI" id="CHEBI:58416"/>
        <label>6</label>
    </ligand>
    <ligandPart>
        <name>Mg</name>
        <dbReference type="ChEBI" id="CHEBI:25107"/>
    </ligandPart>
</feature>
<feature type="binding site" evidence="1">
    <location>
        <position position="254"/>
    </location>
    <ligand>
        <name>chlorophyll a</name>
        <dbReference type="ChEBI" id="CHEBI:58416"/>
        <label>6</label>
    </ligand>
</feature>
<feature type="binding site" evidence="1">
    <location>
        <position position="261"/>
    </location>
    <ligand>
        <name>chlorophyll b</name>
        <dbReference type="ChEBI" id="CHEBI:61721"/>
        <label>5</label>
    </ligand>
</feature>
<name>CB2C_SOLLC</name>
<keyword id="KW-0148">Chlorophyll</keyword>
<keyword id="KW-0150">Chloroplast</keyword>
<keyword id="KW-0157">Chromophore</keyword>
<keyword id="KW-0460">Magnesium</keyword>
<keyword id="KW-0472">Membrane</keyword>
<keyword id="KW-0479">Metal-binding</keyword>
<keyword id="KW-0597">Phosphoprotein</keyword>
<keyword id="KW-0602">Photosynthesis</keyword>
<keyword id="KW-0603">Photosystem I</keyword>
<keyword id="KW-0604">Photosystem II</keyword>
<keyword id="KW-0934">Plastid</keyword>
<keyword id="KW-1185">Reference proteome</keyword>
<keyword id="KW-0793">Thylakoid</keyword>
<keyword id="KW-0809">Transit peptide</keyword>
<keyword id="KW-0812">Transmembrane</keyword>
<keyword id="KW-1133">Transmembrane helix</keyword>
<dbReference type="EMBL" id="M30617">
    <property type="protein sequence ID" value="AAA34151.1"/>
    <property type="molecule type" value="Genomic_DNA"/>
</dbReference>
<dbReference type="EMBL" id="M30618">
    <property type="protein sequence ID" value="AAA34152.1"/>
    <property type="molecule type" value="Genomic_DNA"/>
</dbReference>
<dbReference type="STRING" id="4081.P14275"/>
<dbReference type="InParanoid" id="P14275"/>
<dbReference type="Proteomes" id="UP000004994">
    <property type="component" value="Unplaced"/>
</dbReference>
<dbReference type="ExpressionAtlas" id="P14275">
    <property type="expression patterns" value="baseline and differential"/>
</dbReference>
<dbReference type="GO" id="GO:0009535">
    <property type="term" value="C:chloroplast thylakoid membrane"/>
    <property type="evidence" value="ECO:0000318"/>
    <property type="project" value="GO_Central"/>
</dbReference>
<dbReference type="GO" id="GO:0009522">
    <property type="term" value="C:photosystem I"/>
    <property type="evidence" value="ECO:0007669"/>
    <property type="project" value="UniProtKB-KW"/>
</dbReference>
<dbReference type="GO" id="GO:0009523">
    <property type="term" value="C:photosystem II"/>
    <property type="evidence" value="ECO:0007669"/>
    <property type="project" value="UniProtKB-KW"/>
</dbReference>
<dbReference type="GO" id="GO:0016168">
    <property type="term" value="F:chlorophyll binding"/>
    <property type="evidence" value="ECO:0007669"/>
    <property type="project" value="UniProtKB-KW"/>
</dbReference>
<dbReference type="GO" id="GO:0046872">
    <property type="term" value="F:metal ion binding"/>
    <property type="evidence" value="ECO:0007669"/>
    <property type="project" value="UniProtKB-KW"/>
</dbReference>
<dbReference type="GO" id="GO:0009768">
    <property type="term" value="P:photosynthesis, light harvesting in photosystem I"/>
    <property type="evidence" value="ECO:0000318"/>
    <property type="project" value="GO_Central"/>
</dbReference>
<dbReference type="GO" id="GO:0009416">
    <property type="term" value="P:response to light stimulus"/>
    <property type="evidence" value="ECO:0000318"/>
    <property type="project" value="GO_Central"/>
</dbReference>
<dbReference type="FunFam" id="1.10.3460.10:FF:000013">
    <property type="entry name" value="Chlorophyll a-b binding protein 3A, chloroplastic"/>
    <property type="match status" value="1"/>
</dbReference>
<dbReference type="Gene3D" id="1.10.3460.10">
    <property type="entry name" value="Chlorophyll a/b binding protein domain"/>
    <property type="match status" value="1"/>
</dbReference>
<dbReference type="InterPro" id="IPR001344">
    <property type="entry name" value="Chloro_AB-bd_pln"/>
</dbReference>
<dbReference type="InterPro" id="IPR022796">
    <property type="entry name" value="Chloroa_b-bind"/>
</dbReference>
<dbReference type="PANTHER" id="PTHR21649">
    <property type="entry name" value="CHLOROPHYLL A/B BINDING PROTEIN"/>
    <property type="match status" value="1"/>
</dbReference>
<dbReference type="Pfam" id="PF00504">
    <property type="entry name" value="Chloroa_b-bind"/>
    <property type="match status" value="1"/>
</dbReference>
<dbReference type="SUPFAM" id="SSF103511">
    <property type="entry name" value="Chlorophyll a-b binding protein"/>
    <property type="match status" value="1"/>
</dbReference>
<gene>
    <name type="primary">CAB1C</name>
</gene>
<evidence type="ECO:0000250" key="1"/>
<evidence type="ECO:0000250" key="2">
    <source>
        <dbReference type="UniProtKB" id="P07371"/>
    </source>
</evidence>
<evidence type="ECO:0000250" key="3">
    <source>
        <dbReference type="UniProtKB" id="P12333"/>
    </source>
</evidence>
<evidence type="ECO:0000255" key="4"/>
<evidence type="ECO:0000305" key="5"/>
<proteinExistence type="inferred from homology"/>
<accession>P14275</accession>
<comment type="function">
    <text>The light-harvesting complex (LHC) functions as a light receptor, it captures and delivers excitation energy to photosystems with which it is closely associated.</text>
</comment>
<comment type="cofactor">
    <text evidence="1">Binds at least 14 chlorophylls (8 Chl-a and 6 Chl-b) and carotenoids such as lutein and neoxanthin.</text>
</comment>
<comment type="subunit">
    <text>The LHC complex consists of chlorophyll a-b binding proteins.</text>
</comment>
<comment type="subcellular location">
    <subcellularLocation>
        <location>Plastid</location>
        <location>Chloroplast thylakoid membrane</location>
        <topology>Multi-pass membrane protein</topology>
    </subcellularLocation>
</comment>
<comment type="domain">
    <text>The N-terminus of the protein extends into the stroma where it is involved with adhesion of granal membranes and post-translational modifications; both are believed to mediate the distribution of excitation energy between photosystems I and II.</text>
</comment>
<comment type="PTM">
    <text evidence="1">Photoregulated by reversible phosphorylation of its threonine residues.</text>
</comment>
<comment type="similarity">
    <text evidence="5">Belongs to the light-harvesting chlorophyll a/b-binding (LHC) protein family.</text>
</comment>
<sequence>MAAATMALSSPSFAGQAVKLSPSASEISGNGRITMRKAVAKSAPSSSPWXXXXXXXXXXXXXXXXXXXXXXXXXXXXXXXXXXXXXXXXXXXXXXXXXXXXXXXXXXXXXXXXXXXXXXXXXXXXXXXXXXXXXXXXXXXXXXXXXXXXSLVHAQSILAIWACQVVLMGAVEGYRIAGGPLGEVVDPLYPGGSFDPLGLAEDPEAFAELKVKEIKNGRLAMFSMFGFFVQAIVTGKGPLENLADHLADPVNNNAWAFATNFVPGK</sequence>